<name>GLGS_SALEP</name>
<evidence type="ECO:0000255" key="1">
    <source>
        <dbReference type="HAMAP-Rule" id="MF_00525"/>
    </source>
</evidence>
<proteinExistence type="inferred from homology"/>
<protein>
    <recommendedName>
        <fullName evidence="1">Surface composition regulator</fullName>
    </recommendedName>
</protein>
<dbReference type="EMBL" id="AM933172">
    <property type="protein sequence ID" value="CAR34615.1"/>
    <property type="molecule type" value="Genomic_DNA"/>
</dbReference>
<dbReference type="SMR" id="B5QZ33"/>
<dbReference type="KEGG" id="set:SEN3039"/>
<dbReference type="HOGENOM" id="CLU_185971_0_0_6"/>
<dbReference type="Proteomes" id="UP000000613">
    <property type="component" value="Chromosome"/>
</dbReference>
<dbReference type="GO" id="GO:1902201">
    <property type="term" value="P:negative regulation of bacterial-type flagellum-dependent cell motility"/>
    <property type="evidence" value="ECO:0007669"/>
    <property type="project" value="UniProtKB-UniRule"/>
</dbReference>
<dbReference type="GO" id="GO:1900191">
    <property type="term" value="P:negative regulation of single-species biofilm formation"/>
    <property type="evidence" value="ECO:0007669"/>
    <property type="project" value="UniProtKB-UniRule"/>
</dbReference>
<dbReference type="Gene3D" id="1.20.970.20">
    <property type="entry name" value="Glycogen synthesis protein GlgS"/>
    <property type="match status" value="1"/>
</dbReference>
<dbReference type="HAMAP" id="MF_00525">
    <property type="entry name" value="GlgS"/>
    <property type="match status" value="1"/>
</dbReference>
<dbReference type="InterPro" id="IPR015065">
    <property type="entry name" value="GlgS"/>
</dbReference>
<dbReference type="InterPro" id="IPR036295">
    <property type="entry name" value="GlgS_sf"/>
</dbReference>
<dbReference type="NCBIfam" id="NF002793">
    <property type="entry name" value="PRK02922.1"/>
    <property type="match status" value="1"/>
</dbReference>
<dbReference type="Pfam" id="PF08971">
    <property type="entry name" value="GlgS"/>
    <property type="match status" value="1"/>
</dbReference>
<dbReference type="SUPFAM" id="SSF109747">
    <property type="entry name" value="Glycogen synthesis protein GlgS"/>
    <property type="match status" value="1"/>
</dbReference>
<feature type="chain" id="PRO_1000127742" description="Surface composition regulator">
    <location>
        <begin position="1"/>
        <end position="67"/>
    </location>
</feature>
<gene>
    <name evidence="1" type="primary">glgS</name>
    <name type="ordered locus">SEN3039</name>
</gene>
<accession>B5QZ33</accession>
<reference key="1">
    <citation type="journal article" date="2008" name="Genome Res.">
        <title>Comparative genome analysis of Salmonella enteritidis PT4 and Salmonella gallinarum 287/91 provides insights into evolutionary and host adaptation pathways.</title>
        <authorList>
            <person name="Thomson N.R."/>
            <person name="Clayton D.J."/>
            <person name="Windhorst D."/>
            <person name="Vernikos G."/>
            <person name="Davidson S."/>
            <person name="Churcher C."/>
            <person name="Quail M.A."/>
            <person name="Stevens M."/>
            <person name="Jones M.A."/>
            <person name="Watson M."/>
            <person name="Barron A."/>
            <person name="Layton A."/>
            <person name="Pickard D."/>
            <person name="Kingsley R.A."/>
            <person name="Bignell A."/>
            <person name="Clark L."/>
            <person name="Harris B."/>
            <person name="Ormond D."/>
            <person name="Abdellah Z."/>
            <person name="Brooks K."/>
            <person name="Cherevach I."/>
            <person name="Chillingworth T."/>
            <person name="Woodward J."/>
            <person name="Norberczak H."/>
            <person name="Lord A."/>
            <person name="Arrowsmith C."/>
            <person name="Jagels K."/>
            <person name="Moule S."/>
            <person name="Mungall K."/>
            <person name="Saunders M."/>
            <person name="Whitehead S."/>
            <person name="Chabalgoity J.A."/>
            <person name="Maskell D."/>
            <person name="Humphreys T."/>
            <person name="Roberts M."/>
            <person name="Barrow P.A."/>
            <person name="Dougan G."/>
            <person name="Parkhill J."/>
        </authorList>
    </citation>
    <scope>NUCLEOTIDE SEQUENCE [LARGE SCALE GENOMIC DNA]</scope>
    <source>
        <strain>P125109</strain>
    </source>
</reference>
<organism>
    <name type="scientific">Salmonella enteritidis PT4 (strain P125109)</name>
    <dbReference type="NCBI Taxonomy" id="550537"/>
    <lineage>
        <taxon>Bacteria</taxon>
        <taxon>Pseudomonadati</taxon>
        <taxon>Pseudomonadota</taxon>
        <taxon>Gammaproteobacteria</taxon>
        <taxon>Enterobacterales</taxon>
        <taxon>Enterobacteriaceae</taxon>
        <taxon>Salmonella</taxon>
    </lineage>
</organism>
<sequence length="67" mass="7957">MNNNNVYSLNNFDFLARSFARMQAEGRPVDIQAVTGNMDEEHRDWFCKRYALYCQQATQAKRLELEH</sequence>
<comment type="function">
    <text evidence="1">Major determinant of cell surface composition. Negatively regulates motility, adhesion and synthesis of biofilm exopolysaccharides.</text>
</comment>
<comment type="similarity">
    <text evidence="1">Belongs to the GlgS family.</text>
</comment>